<accession>Q54F40</accession>
<name>Y1133_DICDI</name>
<comment type="catalytic activity">
    <reaction>
        <text>L-seryl-[protein] + ATP = O-phospho-L-seryl-[protein] + ADP + H(+)</text>
        <dbReference type="Rhea" id="RHEA:17989"/>
        <dbReference type="Rhea" id="RHEA-COMP:9863"/>
        <dbReference type="Rhea" id="RHEA-COMP:11604"/>
        <dbReference type="ChEBI" id="CHEBI:15378"/>
        <dbReference type="ChEBI" id="CHEBI:29999"/>
        <dbReference type="ChEBI" id="CHEBI:30616"/>
        <dbReference type="ChEBI" id="CHEBI:83421"/>
        <dbReference type="ChEBI" id="CHEBI:456216"/>
        <dbReference type="EC" id="2.7.11.1"/>
    </reaction>
</comment>
<comment type="catalytic activity">
    <reaction>
        <text>L-threonyl-[protein] + ATP = O-phospho-L-threonyl-[protein] + ADP + H(+)</text>
        <dbReference type="Rhea" id="RHEA:46608"/>
        <dbReference type="Rhea" id="RHEA-COMP:11060"/>
        <dbReference type="Rhea" id="RHEA-COMP:11605"/>
        <dbReference type="ChEBI" id="CHEBI:15378"/>
        <dbReference type="ChEBI" id="CHEBI:30013"/>
        <dbReference type="ChEBI" id="CHEBI:30616"/>
        <dbReference type="ChEBI" id="CHEBI:61977"/>
        <dbReference type="ChEBI" id="CHEBI:456216"/>
        <dbReference type="EC" id="2.7.11.1"/>
    </reaction>
</comment>
<comment type="similarity">
    <text evidence="2">Belongs to the protein kinase superfamily. Ser/Thr protein kinase family. WEE1 subfamily.</text>
</comment>
<proteinExistence type="inferred from homology"/>
<dbReference type="EC" id="2.7.11.1"/>
<dbReference type="EMBL" id="AAFI02000175">
    <property type="protein sequence ID" value="EAL61850.1"/>
    <property type="molecule type" value="Genomic_DNA"/>
</dbReference>
<dbReference type="RefSeq" id="XP_635350.1">
    <property type="nucleotide sequence ID" value="XM_630258.1"/>
</dbReference>
<dbReference type="SMR" id="Q54F40"/>
<dbReference type="STRING" id="44689.Q54F40"/>
<dbReference type="PaxDb" id="44689-DDB0229384"/>
<dbReference type="EnsemblProtists" id="EAL61850">
    <property type="protein sequence ID" value="EAL61850"/>
    <property type="gene ID" value="DDB_G0291133"/>
</dbReference>
<dbReference type="GeneID" id="8627998"/>
<dbReference type="KEGG" id="ddi:DDB_G0291133"/>
<dbReference type="dictyBase" id="DDB_G0291133"/>
<dbReference type="VEuPathDB" id="AmoebaDB:DDB_G0291133"/>
<dbReference type="eggNOG" id="KOG0601">
    <property type="taxonomic scope" value="Eukaryota"/>
</dbReference>
<dbReference type="HOGENOM" id="CLU_359991_0_0_1"/>
<dbReference type="InParanoid" id="Q54F40"/>
<dbReference type="OMA" id="QYYSSWE"/>
<dbReference type="Reactome" id="R-DDI-156711">
    <property type="pathway name" value="Polo-like kinase mediated events"/>
</dbReference>
<dbReference type="PRO" id="PR:Q54F40"/>
<dbReference type="Proteomes" id="UP000002195">
    <property type="component" value="Chromosome 5"/>
</dbReference>
<dbReference type="GO" id="GO:0005737">
    <property type="term" value="C:cytoplasm"/>
    <property type="evidence" value="ECO:0000318"/>
    <property type="project" value="GO_Central"/>
</dbReference>
<dbReference type="GO" id="GO:0005634">
    <property type="term" value="C:nucleus"/>
    <property type="evidence" value="ECO:0000318"/>
    <property type="project" value="GO_Central"/>
</dbReference>
<dbReference type="GO" id="GO:0005524">
    <property type="term" value="F:ATP binding"/>
    <property type="evidence" value="ECO:0007669"/>
    <property type="project" value="UniProtKB-KW"/>
</dbReference>
<dbReference type="GO" id="GO:0046872">
    <property type="term" value="F:metal ion binding"/>
    <property type="evidence" value="ECO:0007669"/>
    <property type="project" value="UniProtKB-KW"/>
</dbReference>
<dbReference type="GO" id="GO:0004672">
    <property type="term" value="F:protein kinase activity"/>
    <property type="evidence" value="ECO:0000318"/>
    <property type="project" value="GO_Central"/>
</dbReference>
<dbReference type="GO" id="GO:0106310">
    <property type="term" value="F:protein serine kinase activity"/>
    <property type="evidence" value="ECO:0007669"/>
    <property type="project" value="RHEA"/>
</dbReference>
<dbReference type="GO" id="GO:0004674">
    <property type="term" value="F:protein serine/threonine kinase activity"/>
    <property type="evidence" value="ECO:0007669"/>
    <property type="project" value="UniProtKB-KW"/>
</dbReference>
<dbReference type="GO" id="GO:0000076">
    <property type="term" value="P:DNA replication checkpoint signaling"/>
    <property type="evidence" value="ECO:0007669"/>
    <property type="project" value="InterPro"/>
</dbReference>
<dbReference type="GO" id="GO:0010972">
    <property type="term" value="P:negative regulation of G2/M transition of mitotic cell cycle"/>
    <property type="evidence" value="ECO:0000318"/>
    <property type="project" value="GO_Central"/>
</dbReference>
<dbReference type="GO" id="GO:0110031">
    <property type="term" value="P:negative regulation of G2/MI transition of meiotic cell cycle"/>
    <property type="evidence" value="ECO:0000318"/>
    <property type="project" value="GO_Central"/>
</dbReference>
<dbReference type="CDD" id="cd13997">
    <property type="entry name" value="PKc_Wee1_like"/>
    <property type="match status" value="1"/>
</dbReference>
<dbReference type="FunFam" id="1.10.510.10:FF:002241">
    <property type="entry name" value="Probable protein kinase DDB_G0291133"/>
    <property type="match status" value="1"/>
</dbReference>
<dbReference type="FunFam" id="3.30.200.20:FF:001544">
    <property type="entry name" value="Probable protein kinase DDB_G0291133"/>
    <property type="match status" value="1"/>
</dbReference>
<dbReference type="Gene3D" id="3.30.200.20">
    <property type="entry name" value="Phosphorylase Kinase, domain 1"/>
    <property type="match status" value="1"/>
</dbReference>
<dbReference type="Gene3D" id="1.10.510.10">
    <property type="entry name" value="Transferase(Phosphotransferase) domain 1"/>
    <property type="match status" value="1"/>
</dbReference>
<dbReference type="InterPro" id="IPR050339">
    <property type="entry name" value="CC_SR_Kinase"/>
</dbReference>
<dbReference type="InterPro" id="IPR011009">
    <property type="entry name" value="Kinase-like_dom_sf"/>
</dbReference>
<dbReference type="InterPro" id="IPR045067">
    <property type="entry name" value="PKc_Wee1-like"/>
</dbReference>
<dbReference type="InterPro" id="IPR000719">
    <property type="entry name" value="Prot_kinase_dom"/>
</dbReference>
<dbReference type="InterPro" id="IPR017441">
    <property type="entry name" value="Protein_kinase_ATP_BS"/>
</dbReference>
<dbReference type="InterPro" id="IPR008271">
    <property type="entry name" value="Ser/Thr_kinase_AS"/>
</dbReference>
<dbReference type="PANTHER" id="PTHR11042">
    <property type="entry name" value="EUKARYOTIC TRANSLATION INITIATION FACTOR 2-ALPHA KINASE EIF2-ALPHA KINASE -RELATED"/>
    <property type="match status" value="1"/>
</dbReference>
<dbReference type="PANTHER" id="PTHR11042:SF190">
    <property type="entry name" value="MITOSIS INHIBITOR PROTEIN KINASE MIK1"/>
    <property type="match status" value="1"/>
</dbReference>
<dbReference type="Pfam" id="PF00069">
    <property type="entry name" value="Pkinase"/>
    <property type="match status" value="1"/>
</dbReference>
<dbReference type="SMART" id="SM00220">
    <property type="entry name" value="S_TKc"/>
    <property type="match status" value="1"/>
</dbReference>
<dbReference type="SUPFAM" id="SSF56112">
    <property type="entry name" value="Protein kinase-like (PK-like)"/>
    <property type="match status" value="1"/>
</dbReference>
<dbReference type="PROSITE" id="PS00107">
    <property type="entry name" value="PROTEIN_KINASE_ATP"/>
    <property type="match status" value="1"/>
</dbReference>
<dbReference type="PROSITE" id="PS50011">
    <property type="entry name" value="PROTEIN_KINASE_DOM"/>
    <property type="match status" value="1"/>
</dbReference>
<dbReference type="PROSITE" id="PS00108">
    <property type="entry name" value="PROTEIN_KINASE_ST"/>
    <property type="match status" value="1"/>
</dbReference>
<sequence length="778" mass="87049">MEPTYSIPSTPLKTPIRITVNNGHNSGQHSLSLSTCKPTPEQNAFNLNMFSEKKKNQYQTPKCPSPPLKSTPASRVNSNLPLIHHISSLSMFSPTTSLSDFMNCENGGSNNIDFSSSFGSSSLNSNNTLSINNNNNNNNNNGGYKIPSSVNKNSNNYNSNSNSNSSNNVISLFDKNFDVVCKLGSGSFSDVFKVKSKFDGNSYAIKQARHQFRGFQERERAVREVKAAVSLPPHTNVLQYYSSWEQNNTLFIQTELCENGSLQDFLDSLSPDQILSEELIWNFLLDVCLGIQHIHSYNMLHLDIKPENLFISSQGNIKIGDFGMAVKLETTNNNNNGNGGCQSNNTSMDSDCNNLSLDEDDIFFDFLEGDSRYLAYEFLLDKKQISKPSDIFSIGVTFFEMVTGNEMPTNGPLWEQLRSDKAIDFLEPGKYSDSLYQVILDMMKSNITERISLDQILLNENIQLVQQKRLNQFQNIDNIENDNNNNNNTDNNNNNNTDNINNDNNDDNNNNINNYNLKLITPYFQYQKERKDEELKEIIEFGEIREIKEKFEHHQFAIPTPHFVRSNAGRSSSSSLFSDEEEDDDDDDDSGRDSPIHFSLNNLNNSSSNIGISESNSNNSFSSILEENNESSSSSPLPSLSFSRRLSTSSLVTTISPKPNFNTSGNKLFSNENNNSNNNNNNNNNNQNNNNNNGFYGFTNNGSCNNLNNLNNLNSSGEFSNSSKKKLGKRGLPLLDVVNGGGNSGSKVCAIKRSFDSHPQESDKMSPRNLLSLFQETN</sequence>
<protein>
    <recommendedName>
        <fullName>Probable protein kinase DDB_G0291133</fullName>
        <ecNumber>2.7.11.1</ecNumber>
    </recommendedName>
</protein>
<organism>
    <name type="scientific">Dictyostelium discoideum</name>
    <name type="common">Social amoeba</name>
    <dbReference type="NCBI Taxonomy" id="44689"/>
    <lineage>
        <taxon>Eukaryota</taxon>
        <taxon>Amoebozoa</taxon>
        <taxon>Evosea</taxon>
        <taxon>Eumycetozoa</taxon>
        <taxon>Dictyostelia</taxon>
        <taxon>Dictyosteliales</taxon>
        <taxon>Dictyosteliaceae</taxon>
        <taxon>Dictyostelium</taxon>
    </lineage>
</organism>
<evidence type="ECO:0000250" key="1"/>
<evidence type="ECO:0000255" key="2">
    <source>
        <dbReference type="PROSITE-ProRule" id="PRU00159"/>
    </source>
</evidence>
<evidence type="ECO:0000255" key="3">
    <source>
        <dbReference type="PROSITE-ProRule" id="PRU10027"/>
    </source>
</evidence>
<evidence type="ECO:0000256" key="4">
    <source>
        <dbReference type="SAM" id="MobiDB-lite"/>
    </source>
</evidence>
<reference key="1">
    <citation type="journal article" date="2005" name="Nature">
        <title>The genome of the social amoeba Dictyostelium discoideum.</title>
        <authorList>
            <person name="Eichinger L."/>
            <person name="Pachebat J.A."/>
            <person name="Gloeckner G."/>
            <person name="Rajandream M.A."/>
            <person name="Sucgang R."/>
            <person name="Berriman M."/>
            <person name="Song J."/>
            <person name="Olsen R."/>
            <person name="Szafranski K."/>
            <person name="Xu Q."/>
            <person name="Tunggal B."/>
            <person name="Kummerfeld S."/>
            <person name="Madera M."/>
            <person name="Konfortov B.A."/>
            <person name="Rivero F."/>
            <person name="Bankier A.T."/>
            <person name="Lehmann R."/>
            <person name="Hamlin N."/>
            <person name="Davies R."/>
            <person name="Gaudet P."/>
            <person name="Fey P."/>
            <person name="Pilcher K."/>
            <person name="Chen G."/>
            <person name="Saunders D."/>
            <person name="Sodergren E.J."/>
            <person name="Davis P."/>
            <person name="Kerhornou A."/>
            <person name="Nie X."/>
            <person name="Hall N."/>
            <person name="Anjard C."/>
            <person name="Hemphill L."/>
            <person name="Bason N."/>
            <person name="Farbrother P."/>
            <person name="Desany B."/>
            <person name="Just E."/>
            <person name="Morio T."/>
            <person name="Rost R."/>
            <person name="Churcher C.M."/>
            <person name="Cooper J."/>
            <person name="Haydock S."/>
            <person name="van Driessche N."/>
            <person name="Cronin A."/>
            <person name="Goodhead I."/>
            <person name="Muzny D.M."/>
            <person name="Mourier T."/>
            <person name="Pain A."/>
            <person name="Lu M."/>
            <person name="Harper D."/>
            <person name="Lindsay R."/>
            <person name="Hauser H."/>
            <person name="James K.D."/>
            <person name="Quiles M."/>
            <person name="Madan Babu M."/>
            <person name="Saito T."/>
            <person name="Buchrieser C."/>
            <person name="Wardroper A."/>
            <person name="Felder M."/>
            <person name="Thangavelu M."/>
            <person name="Johnson D."/>
            <person name="Knights A."/>
            <person name="Loulseged H."/>
            <person name="Mungall K.L."/>
            <person name="Oliver K."/>
            <person name="Price C."/>
            <person name="Quail M.A."/>
            <person name="Urushihara H."/>
            <person name="Hernandez J."/>
            <person name="Rabbinowitsch E."/>
            <person name="Steffen D."/>
            <person name="Sanders M."/>
            <person name="Ma J."/>
            <person name="Kohara Y."/>
            <person name="Sharp S."/>
            <person name="Simmonds M.N."/>
            <person name="Spiegler S."/>
            <person name="Tivey A."/>
            <person name="Sugano S."/>
            <person name="White B."/>
            <person name="Walker D."/>
            <person name="Woodward J.R."/>
            <person name="Winckler T."/>
            <person name="Tanaka Y."/>
            <person name="Shaulsky G."/>
            <person name="Schleicher M."/>
            <person name="Weinstock G.M."/>
            <person name="Rosenthal A."/>
            <person name="Cox E.C."/>
            <person name="Chisholm R.L."/>
            <person name="Gibbs R.A."/>
            <person name="Loomis W.F."/>
            <person name="Platzer M."/>
            <person name="Kay R.R."/>
            <person name="Williams J.G."/>
            <person name="Dear P.H."/>
            <person name="Noegel A.A."/>
            <person name="Barrell B.G."/>
            <person name="Kuspa A."/>
        </authorList>
    </citation>
    <scope>NUCLEOTIDE SEQUENCE [LARGE SCALE GENOMIC DNA]</scope>
    <source>
        <strain>AX4</strain>
    </source>
</reference>
<keyword id="KW-0067">ATP-binding</keyword>
<keyword id="KW-0418">Kinase</keyword>
<keyword id="KW-0460">Magnesium</keyword>
<keyword id="KW-0479">Metal-binding</keyword>
<keyword id="KW-0547">Nucleotide-binding</keyword>
<keyword id="KW-1185">Reference proteome</keyword>
<keyword id="KW-0723">Serine/threonine-protein kinase</keyword>
<keyword id="KW-0808">Transferase</keyword>
<feature type="chain" id="PRO_0000362042" description="Probable protein kinase DDB_G0291133">
    <location>
        <begin position="1"/>
        <end position="778"/>
    </location>
</feature>
<feature type="domain" description="Protein kinase" evidence="2">
    <location>
        <begin position="177"/>
        <end position="462"/>
    </location>
</feature>
<feature type="region of interest" description="Disordered" evidence="4">
    <location>
        <begin position="129"/>
        <end position="162"/>
    </location>
</feature>
<feature type="region of interest" description="Disordered" evidence="4">
    <location>
        <begin position="478"/>
        <end position="509"/>
    </location>
</feature>
<feature type="region of interest" description="Disordered" evidence="4">
    <location>
        <begin position="562"/>
        <end position="697"/>
    </location>
</feature>
<feature type="region of interest" description="Disordered" evidence="4">
    <location>
        <begin position="757"/>
        <end position="778"/>
    </location>
</feature>
<feature type="compositionally biased region" description="Acidic residues" evidence="4">
    <location>
        <begin position="578"/>
        <end position="590"/>
    </location>
</feature>
<feature type="compositionally biased region" description="Low complexity" evidence="4">
    <location>
        <begin position="599"/>
        <end position="651"/>
    </location>
</feature>
<feature type="compositionally biased region" description="Polar residues" evidence="4">
    <location>
        <begin position="652"/>
        <end position="670"/>
    </location>
</feature>
<feature type="compositionally biased region" description="Low complexity" evidence="4">
    <location>
        <begin position="671"/>
        <end position="693"/>
    </location>
</feature>
<feature type="compositionally biased region" description="Basic and acidic residues" evidence="4">
    <location>
        <begin position="757"/>
        <end position="766"/>
    </location>
</feature>
<feature type="active site" description="Proton acceptor" evidence="2 3">
    <location>
        <position position="303"/>
    </location>
</feature>
<feature type="binding site" evidence="2">
    <location>
        <begin position="183"/>
        <end position="191"/>
    </location>
    <ligand>
        <name>ATP</name>
        <dbReference type="ChEBI" id="CHEBI:30616"/>
    </ligand>
</feature>
<feature type="binding site" evidence="2">
    <location>
        <position position="206"/>
    </location>
    <ligand>
        <name>ATP</name>
        <dbReference type="ChEBI" id="CHEBI:30616"/>
    </ligand>
</feature>
<feature type="binding site" evidence="1">
    <location>
        <position position="308"/>
    </location>
    <ligand>
        <name>Mg(2+)</name>
        <dbReference type="ChEBI" id="CHEBI:18420"/>
    </ligand>
</feature>
<feature type="binding site" evidence="1">
    <location>
        <position position="321"/>
    </location>
    <ligand>
        <name>Mg(2+)</name>
        <dbReference type="ChEBI" id="CHEBI:18420"/>
    </ligand>
</feature>
<gene>
    <name type="ORF">DDB_G0291133</name>
</gene>